<name>PCRB_BACLD</name>
<keyword id="KW-0444">Lipid biosynthesis</keyword>
<keyword id="KW-0443">Lipid metabolism</keyword>
<keyword id="KW-0460">Magnesium</keyword>
<keyword id="KW-0479">Metal-binding</keyword>
<keyword id="KW-0594">Phospholipid biosynthesis</keyword>
<keyword id="KW-1208">Phospholipid metabolism</keyword>
<keyword id="KW-1185">Reference proteome</keyword>
<keyword id="KW-0808">Transferase</keyword>
<reference key="1">
    <citation type="journal article" date="2004" name="J. Mol. Microbiol. Biotechnol.">
        <title>The complete genome sequence of Bacillus licheniformis DSM13, an organism with great industrial potential.</title>
        <authorList>
            <person name="Veith B."/>
            <person name="Herzberg C."/>
            <person name="Steckel S."/>
            <person name="Feesche J."/>
            <person name="Maurer K.H."/>
            <person name="Ehrenreich P."/>
            <person name="Baeumer S."/>
            <person name="Henne A."/>
            <person name="Liesegang H."/>
            <person name="Merkl R."/>
            <person name="Ehrenreich A."/>
            <person name="Gottschalk G."/>
        </authorList>
    </citation>
    <scope>NUCLEOTIDE SEQUENCE [LARGE SCALE GENOMIC DNA]</scope>
    <source>
        <strain>ATCC 14580 / DSM 13 / JCM 2505 / CCUG 7422 / NBRC 12200 / NCIMB 9375 / NCTC 10341 / NRRL NRS-1264 / Gibson 46</strain>
    </source>
</reference>
<reference key="2">
    <citation type="journal article" date="2004" name="Genome Biol.">
        <title>Complete genome sequence of the industrial bacterium Bacillus licheniformis and comparisons with closely related Bacillus species.</title>
        <authorList>
            <person name="Rey M.W."/>
            <person name="Ramaiya P."/>
            <person name="Nelson B.A."/>
            <person name="Brody-Karpin S.D."/>
            <person name="Zaretsky E.J."/>
            <person name="Tang M."/>
            <person name="Lopez de Leon A."/>
            <person name="Xiang H."/>
            <person name="Gusti V."/>
            <person name="Clausen I.G."/>
            <person name="Olsen P.B."/>
            <person name="Rasmussen M.D."/>
            <person name="Andersen J.T."/>
            <person name="Joergensen P.L."/>
            <person name="Larsen T.S."/>
            <person name="Sorokin A."/>
            <person name="Bolotin A."/>
            <person name="Lapidus A."/>
            <person name="Galleron N."/>
            <person name="Ehrlich S.D."/>
            <person name="Berka R.M."/>
        </authorList>
    </citation>
    <scope>NUCLEOTIDE SEQUENCE [LARGE SCALE GENOMIC DNA]</scope>
    <source>
        <strain>ATCC 14580 / DSM 13 / JCM 2505 / CCUG 7422 / NBRC 12200 / NCIMB 9375 / NCTC 10341 / NRRL NRS-1264 / Gibson 46</strain>
    </source>
</reference>
<protein>
    <recommendedName>
        <fullName evidence="1">Heptaprenylglyceryl phosphate synthase</fullName>
        <shortName evidence="1">HepGP synthase</shortName>
        <ecNumber evidence="1">2.5.1.n9</ecNumber>
    </recommendedName>
    <alternativeName>
        <fullName evidence="1">Glycerol-1-phosphate heptaprenyltransferase</fullName>
    </alternativeName>
</protein>
<evidence type="ECO:0000255" key="1">
    <source>
        <dbReference type="HAMAP-Rule" id="MF_00112"/>
    </source>
</evidence>
<gene>
    <name evidence="1" type="primary">pcrB</name>
    <name type="ordered locus">BLi00714</name>
    <name type="ordered locus">BL00587</name>
</gene>
<organism>
    <name type="scientific">Bacillus licheniformis (strain ATCC 14580 / DSM 13 / JCM 2505 / CCUG 7422 / NBRC 12200 / NCIMB 9375 / NCTC 10341 / NRRL NRS-1264 / Gibson 46)</name>
    <dbReference type="NCBI Taxonomy" id="279010"/>
    <lineage>
        <taxon>Bacteria</taxon>
        <taxon>Bacillati</taxon>
        <taxon>Bacillota</taxon>
        <taxon>Bacilli</taxon>
        <taxon>Bacillales</taxon>
        <taxon>Bacillaceae</taxon>
        <taxon>Bacillus</taxon>
    </lineage>
</organism>
<proteinExistence type="inferred from homology"/>
<dbReference type="EC" id="2.5.1.n9" evidence="1"/>
<dbReference type="EMBL" id="AE017333">
    <property type="protein sequence ID" value="AAU39650.1"/>
    <property type="molecule type" value="Genomic_DNA"/>
</dbReference>
<dbReference type="EMBL" id="CP000002">
    <property type="protein sequence ID" value="AAU22300.1"/>
    <property type="molecule type" value="Genomic_DNA"/>
</dbReference>
<dbReference type="RefSeq" id="WP_003179570.1">
    <property type="nucleotide sequence ID" value="NC_006322.1"/>
</dbReference>
<dbReference type="SMR" id="Q65MR4"/>
<dbReference type="STRING" id="279010.BL00587"/>
<dbReference type="KEGG" id="bld:BLi00714"/>
<dbReference type="KEGG" id="bli:BL00587"/>
<dbReference type="PATRIC" id="fig|279010.13.peg.701"/>
<dbReference type="eggNOG" id="COG1646">
    <property type="taxonomic scope" value="Bacteria"/>
</dbReference>
<dbReference type="HOGENOM" id="CLU_095211_0_0_9"/>
<dbReference type="UniPathway" id="UPA00940"/>
<dbReference type="Proteomes" id="UP000000606">
    <property type="component" value="Chromosome"/>
</dbReference>
<dbReference type="GO" id="GO:0120536">
    <property type="term" value="F:heptaprenylglyceryl phosphate synthase activity"/>
    <property type="evidence" value="ECO:0007669"/>
    <property type="project" value="RHEA"/>
</dbReference>
<dbReference type="GO" id="GO:0000287">
    <property type="term" value="F:magnesium ion binding"/>
    <property type="evidence" value="ECO:0007669"/>
    <property type="project" value="UniProtKB-UniRule"/>
</dbReference>
<dbReference type="GO" id="GO:0046474">
    <property type="term" value="P:glycerophospholipid biosynthetic process"/>
    <property type="evidence" value="ECO:0007669"/>
    <property type="project" value="UniProtKB-UniRule"/>
</dbReference>
<dbReference type="CDD" id="cd02812">
    <property type="entry name" value="PcrB_like"/>
    <property type="match status" value="1"/>
</dbReference>
<dbReference type="FunFam" id="3.20.20.390:FF:000001">
    <property type="entry name" value="Heptaprenylglyceryl phosphate synthase"/>
    <property type="match status" value="1"/>
</dbReference>
<dbReference type="Gene3D" id="3.20.20.390">
    <property type="entry name" value="FMN-linked oxidoreductases"/>
    <property type="match status" value="1"/>
</dbReference>
<dbReference type="HAMAP" id="MF_00112">
    <property type="entry name" value="GGGP_HepGP_synthase"/>
    <property type="match status" value="1"/>
</dbReference>
<dbReference type="InterPro" id="IPR039074">
    <property type="entry name" value="GGGP/HepGP_synthase_I"/>
</dbReference>
<dbReference type="InterPro" id="IPR038597">
    <property type="entry name" value="GGGP/HepGP_synthase_sf"/>
</dbReference>
<dbReference type="InterPro" id="IPR008205">
    <property type="entry name" value="GGGP_HepGP_synthase"/>
</dbReference>
<dbReference type="NCBIfam" id="TIGR01768">
    <property type="entry name" value="GGGP-family"/>
    <property type="match status" value="1"/>
</dbReference>
<dbReference type="NCBIfam" id="NF003197">
    <property type="entry name" value="PRK04169.1-1"/>
    <property type="match status" value="1"/>
</dbReference>
<dbReference type="NCBIfam" id="NF003199">
    <property type="entry name" value="PRK04169.1-3"/>
    <property type="match status" value="1"/>
</dbReference>
<dbReference type="PANTHER" id="PTHR40029">
    <property type="match status" value="1"/>
</dbReference>
<dbReference type="PANTHER" id="PTHR40029:SF2">
    <property type="entry name" value="HEPTAPRENYLGLYCERYL PHOSPHATE SYNTHASE"/>
    <property type="match status" value="1"/>
</dbReference>
<dbReference type="Pfam" id="PF01884">
    <property type="entry name" value="PcrB"/>
    <property type="match status" value="1"/>
</dbReference>
<dbReference type="SUPFAM" id="SSF51395">
    <property type="entry name" value="FMN-linked oxidoreductases"/>
    <property type="match status" value="1"/>
</dbReference>
<sequence length="228" mass="25449">MYDITEWKHVFKLDPNKDITDDQLEQLCESGTDAVLIGGSDHVTEDDVLRLMSKVRRFLVPCVLEVSTIDAIVPGFDLYFIPTVLNSRDTDWIAGLHKKAMKEYGELMSPEEIVVEGYCILNQDCKAAALTNADTELDIEDIKAYARVAEHLFRLPVFYLEYSGMLGDSETVKETKAVLQETTLFYGGGIKDAETAVKMAEHADVIVVGNAIYENFEEALKTVQAVKG</sequence>
<comment type="function">
    <text evidence="1">Prenyltransferase that catalyzes in vivo the transfer of the heptaprenyl moiety of heptaprenyl pyrophosphate (HepPP; 35 carbon atoms) to the C3 hydroxyl of sn-glycerol-1-phosphate (G1P), producing heptaprenylglyceryl phosphate (HepGP). This reaction is an ether-bond-formation step in the biosynthesis of archaea-type G1P-based membrane lipids found in Bacillales.</text>
</comment>
<comment type="catalytic activity">
    <reaction evidence="1">
        <text>sn-glycerol 1-phosphate + all-trans-heptaprenyl diphosphate = 3-heptaprenyl-sn-glycero-1-phosphate + diphosphate</text>
        <dbReference type="Rhea" id="RHEA:33495"/>
        <dbReference type="ChEBI" id="CHEBI:33019"/>
        <dbReference type="ChEBI" id="CHEBI:57685"/>
        <dbReference type="ChEBI" id="CHEBI:58206"/>
        <dbReference type="ChEBI" id="CHEBI:64781"/>
        <dbReference type="EC" id="2.5.1.n9"/>
    </reaction>
</comment>
<comment type="cofactor">
    <cofactor evidence="1">
        <name>Mg(2+)</name>
        <dbReference type="ChEBI" id="CHEBI:18420"/>
    </cofactor>
</comment>
<comment type="pathway">
    <text evidence="1">Membrane lipid metabolism; glycerophospholipid metabolism.</text>
</comment>
<comment type="subunit">
    <text evidence="1">Homodimer.</text>
</comment>
<comment type="similarity">
    <text evidence="1">Belongs to the GGGP/HepGP synthase family. Group I subfamily.</text>
</comment>
<feature type="chain" id="PRO_0000138709" description="Heptaprenylglyceryl phosphate synthase">
    <location>
        <begin position="1"/>
        <end position="228"/>
    </location>
</feature>
<feature type="binding site" evidence="1">
    <location>
        <position position="12"/>
    </location>
    <ligand>
        <name>sn-glycerol 1-phosphate</name>
        <dbReference type="ChEBI" id="CHEBI:57685"/>
    </ligand>
</feature>
<feature type="binding site" evidence="1">
    <location>
        <position position="14"/>
    </location>
    <ligand>
        <name>Mg(2+)</name>
        <dbReference type="ChEBI" id="CHEBI:18420"/>
    </ligand>
</feature>
<feature type="binding site" evidence="1">
    <location>
        <position position="40"/>
    </location>
    <ligand>
        <name>Mg(2+)</name>
        <dbReference type="ChEBI" id="CHEBI:18420"/>
    </ligand>
</feature>
<feature type="binding site" evidence="1">
    <location>
        <begin position="159"/>
        <end position="164"/>
    </location>
    <ligand>
        <name>sn-glycerol 1-phosphate</name>
        <dbReference type="ChEBI" id="CHEBI:57685"/>
    </ligand>
</feature>
<feature type="binding site" evidence="1">
    <location>
        <position position="189"/>
    </location>
    <ligand>
        <name>sn-glycerol 1-phosphate</name>
        <dbReference type="ChEBI" id="CHEBI:57685"/>
    </ligand>
</feature>
<feature type="binding site" evidence="1">
    <location>
        <begin position="209"/>
        <end position="210"/>
    </location>
    <ligand>
        <name>sn-glycerol 1-phosphate</name>
        <dbReference type="ChEBI" id="CHEBI:57685"/>
    </ligand>
</feature>
<accession>Q65MR4</accession>
<accession>Q62Y58</accession>